<gene>
    <name type="primary">Cep89</name>
    <name type="synonym">Ccdc123</name>
</gene>
<comment type="function">
    <text evidence="1">Required for ciliogenesis. Also plays a role in mitochondrial metabolism where it may modulate complex IV activity (By similarity).</text>
</comment>
<comment type="subcellular location">
    <subcellularLocation>
        <location evidence="1">Cytoplasm</location>
        <location evidence="1">Cytosol</location>
    </subcellularLocation>
    <subcellularLocation>
        <location evidence="1">Cytoplasm</location>
        <location evidence="1">Cytoskeleton</location>
        <location evidence="1">Microtubule organizing center</location>
        <location evidence="1">Centrosome</location>
    </subcellularLocation>
    <subcellularLocation>
        <location evidence="1">Cytoplasm</location>
        <location evidence="1">Cytoskeleton</location>
        <location evidence="1">Spindle pole</location>
    </subcellularLocation>
    <subcellularLocation>
        <location evidence="1">Cytoplasm</location>
        <location evidence="1">Cytoskeleton</location>
        <location evidence="1">Microtubule organizing center</location>
        <location evidence="1">Centrosome</location>
        <location evidence="1">Centriole</location>
    </subcellularLocation>
    <subcellularLocation>
        <location evidence="1">Mitochondrion intermembrane space</location>
    </subcellularLocation>
    <text evidence="1">Localizes to the distal appendage region of the centriole, which anchors the mother centriole to the plasma membrane.</text>
</comment>
<comment type="sequence caution" evidence="5">
    <conflict type="frameshift">
        <sequence resource="EMBL-CDS" id="BAC26301"/>
    </conflict>
</comment>
<dbReference type="EMBL" id="AK012067">
    <property type="protein sequence ID" value="BAB28005.1"/>
    <property type="molecule type" value="mRNA"/>
</dbReference>
<dbReference type="EMBL" id="AK029107">
    <property type="protein sequence ID" value="BAC26301.1"/>
    <property type="status" value="ALT_FRAME"/>
    <property type="molecule type" value="mRNA"/>
</dbReference>
<dbReference type="CCDS" id="CCDS39911.1"/>
<dbReference type="RefSeq" id="NP_082396.1">
    <property type="nucleotide sequence ID" value="NM_028120.3"/>
</dbReference>
<dbReference type="SMR" id="Q9CZX2"/>
<dbReference type="BioGRID" id="215178">
    <property type="interactions" value="5"/>
</dbReference>
<dbReference type="FunCoup" id="Q9CZX2">
    <property type="interactions" value="1194"/>
</dbReference>
<dbReference type="IntAct" id="Q9CZX2">
    <property type="interactions" value="1"/>
</dbReference>
<dbReference type="MINT" id="Q9CZX2"/>
<dbReference type="STRING" id="10090.ENSMUSP00000078383"/>
<dbReference type="GlyGen" id="Q9CZX2">
    <property type="glycosylation" value="1 site"/>
</dbReference>
<dbReference type="iPTMnet" id="Q9CZX2"/>
<dbReference type="PhosphoSitePlus" id="Q9CZX2"/>
<dbReference type="PaxDb" id="10090-ENSMUSP00000078383"/>
<dbReference type="ProteomicsDB" id="280072"/>
<dbReference type="Antibodypedia" id="47945">
    <property type="antibodies" value="116 antibodies from 16 providers"/>
</dbReference>
<dbReference type="DNASU" id="72140"/>
<dbReference type="Ensembl" id="ENSMUST00000079414.12">
    <property type="protein sequence ID" value="ENSMUSP00000078383.6"/>
    <property type="gene ID" value="ENSMUSG00000023072.15"/>
</dbReference>
<dbReference type="GeneID" id="72140"/>
<dbReference type="KEGG" id="mmu:72140"/>
<dbReference type="UCSC" id="uc009gjv.1">
    <property type="organism name" value="mouse"/>
</dbReference>
<dbReference type="AGR" id="MGI:1919390"/>
<dbReference type="CTD" id="84902"/>
<dbReference type="MGI" id="MGI:1919390">
    <property type="gene designation" value="Cep89"/>
</dbReference>
<dbReference type="VEuPathDB" id="HostDB:ENSMUSG00000023072"/>
<dbReference type="eggNOG" id="ENOG502QWK8">
    <property type="taxonomic scope" value="Eukaryota"/>
</dbReference>
<dbReference type="GeneTree" id="ENSGT00390000018876"/>
<dbReference type="HOGENOM" id="CLU_023281_0_0_1"/>
<dbReference type="InParanoid" id="Q9CZX2"/>
<dbReference type="OMA" id="ENQQMRE"/>
<dbReference type="OrthoDB" id="6622877at2759"/>
<dbReference type="PhylomeDB" id="Q9CZX2"/>
<dbReference type="TreeFam" id="TF329234"/>
<dbReference type="Reactome" id="R-MMU-5620912">
    <property type="pathway name" value="Anchoring of the basal body to the plasma membrane"/>
</dbReference>
<dbReference type="BioGRID-ORCS" id="72140">
    <property type="hits" value="2 hits in 77 CRISPR screens"/>
</dbReference>
<dbReference type="ChiTaRS" id="Cep89">
    <property type="organism name" value="mouse"/>
</dbReference>
<dbReference type="PRO" id="PR:Q9CZX2"/>
<dbReference type="Proteomes" id="UP000000589">
    <property type="component" value="Chromosome 7"/>
</dbReference>
<dbReference type="RNAct" id="Q9CZX2">
    <property type="molecule type" value="protein"/>
</dbReference>
<dbReference type="Bgee" id="ENSMUSG00000023072">
    <property type="expression patterns" value="Expressed in undifferentiated genital tubercle and 235 other cell types or tissues"/>
</dbReference>
<dbReference type="ExpressionAtlas" id="Q9CZX2">
    <property type="expression patterns" value="baseline and differential"/>
</dbReference>
<dbReference type="GO" id="GO:0005814">
    <property type="term" value="C:centriole"/>
    <property type="evidence" value="ECO:0000314"/>
    <property type="project" value="MGI"/>
</dbReference>
<dbReference type="GO" id="GO:0005813">
    <property type="term" value="C:centrosome"/>
    <property type="evidence" value="ECO:0000250"/>
    <property type="project" value="UniProtKB"/>
</dbReference>
<dbReference type="GO" id="GO:0036064">
    <property type="term" value="C:ciliary basal body"/>
    <property type="evidence" value="ECO:0007669"/>
    <property type="project" value="Ensembl"/>
</dbReference>
<dbReference type="GO" id="GO:0097539">
    <property type="term" value="C:ciliary transition fiber"/>
    <property type="evidence" value="ECO:0000314"/>
    <property type="project" value="MGI"/>
</dbReference>
<dbReference type="GO" id="GO:0005829">
    <property type="term" value="C:cytosol"/>
    <property type="evidence" value="ECO:0007669"/>
    <property type="project" value="UniProtKB-SubCell"/>
</dbReference>
<dbReference type="GO" id="GO:0005758">
    <property type="term" value="C:mitochondrial intermembrane space"/>
    <property type="evidence" value="ECO:0007669"/>
    <property type="project" value="UniProtKB-SubCell"/>
</dbReference>
<dbReference type="GO" id="GO:0031514">
    <property type="term" value="C:motile cilium"/>
    <property type="evidence" value="ECO:0000314"/>
    <property type="project" value="MGI"/>
</dbReference>
<dbReference type="GO" id="GO:0097730">
    <property type="term" value="C:non-motile cilium"/>
    <property type="evidence" value="ECO:0007669"/>
    <property type="project" value="Ensembl"/>
</dbReference>
<dbReference type="GO" id="GO:0016604">
    <property type="term" value="C:nuclear body"/>
    <property type="evidence" value="ECO:0007669"/>
    <property type="project" value="Ensembl"/>
</dbReference>
<dbReference type="GO" id="GO:0000922">
    <property type="term" value="C:spindle pole"/>
    <property type="evidence" value="ECO:0000250"/>
    <property type="project" value="UniProtKB"/>
</dbReference>
<dbReference type="GO" id="GO:0045202">
    <property type="term" value="C:synapse"/>
    <property type="evidence" value="ECO:0007669"/>
    <property type="project" value="GOC"/>
</dbReference>
<dbReference type="GO" id="GO:0007268">
    <property type="term" value="P:chemical synaptic transmission"/>
    <property type="evidence" value="ECO:0007669"/>
    <property type="project" value="InterPro"/>
</dbReference>
<dbReference type="GO" id="GO:0060271">
    <property type="term" value="P:cilium assembly"/>
    <property type="evidence" value="ECO:0000250"/>
    <property type="project" value="UniProtKB"/>
</dbReference>
<dbReference type="GO" id="GO:0033617">
    <property type="term" value="P:mitochondrial cytochrome c oxidase assembly"/>
    <property type="evidence" value="ECO:0007669"/>
    <property type="project" value="Ensembl"/>
</dbReference>
<dbReference type="GO" id="GO:1905515">
    <property type="term" value="P:non-motile cilium assembly"/>
    <property type="evidence" value="ECO:0007669"/>
    <property type="project" value="Ensembl"/>
</dbReference>
<dbReference type="InterPro" id="IPR033545">
    <property type="entry name" value="CEP89"/>
</dbReference>
<dbReference type="PANTHER" id="PTHR36170">
    <property type="entry name" value="CENTROSOMAL PROTEIN OF 89 KDA"/>
    <property type="match status" value="1"/>
</dbReference>
<dbReference type="PANTHER" id="PTHR36170:SF1">
    <property type="entry name" value="CENTROSOMAL PROTEIN OF 89 KDA"/>
    <property type="match status" value="1"/>
</dbReference>
<evidence type="ECO:0000250" key="1"/>
<evidence type="ECO:0000250" key="2">
    <source>
        <dbReference type="UniProtKB" id="Q96ST8"/>
    </source>
</evidence>
<evidence type="ECO:0000255" key="3"/>
<evidence type="ECO:0000256" key="4">
    <source>
        <dbReference type="SAM" id="MobiDB-lite"/>
    </source>
</evidence>
<evidence type="ECO:0000305" key="5"/>
<reference key="1">
    <citation type="journal article" date="2005" name="Science">
        <title>The transcriptional landscape of the mammalian genome.</title>
        <authorList>
            <person name="Carninci P."/>
            <person name="Kasukawa T."/>
            <person name="Katayama S."/>
            <person name="Gough J."/>
            <person name="Frith M.C."/>
            <person name="Maeda N."/>
            <person name="Oyama R."/>
            <person name="Ravasi T."/>
            <person name="Lenhard B."/>
            <person name="Wells C."/>
            <person name="Kodzius R."/>
            <person name="Shimokawa K."/>
            <person name="Bajic V.B."/>
            <person name="Brenner S.E."/>
            <person name="Batalov S."/>
            <person name="Forrest A.R."/>
            <person name="Zavolan M."/>
            <person name="Davis M.J."/>
            <person name="Wilming L.G."/>
            <person name="Aidinis V."/>
            <person name="Allen J.E."/>
            <person name="Ambesi-Impiombato A."/>
            <person name="Apweiler R."/>
            <person name="Aturaliya R.N."/>
            <person name="Bailey T.L."/>
            <person name="Bansal M."/>
            <person name="Baxter L."/>
            <person name="Beisel K.W."/>
            <person name="Bersano T."/>
            <person name="Bono H."/>
            <person name="Chalk A.M."/>
            <person name="Chiu K.P."/>
            <person name="Choudhary V."/>
            <person name="Christoffels A."/>
            <person name="Clutterbuck D.R."/>
            <person name="Crowe M.L."/>
            <person name="Dalla E."/>
            <person name="Dalrymple B.P."/>
            <person name="de Bono B."/>
            <person name="Della Gatta G."/>
            <person name="di Bernardo D."/>
            <person name="Down T."/>
            <person name="Engstrom P."/>
            <person name="Fagiolini M."/>
            <person name="Faulkner G."/>
            <person name="Fletcher C.F."/>
            <person name="Fukushima T."/>
            <person name="Furuno M."/>
            <person name="Futaki S."/>
            <person name="Gariboldi M."/>
            <person name="Georgii-Hemming P."/>
            <person name="Gingeras T.R."/>
            <person name="Gojobori T."/>
            <person name="Green R.E."/>
            <person name="Gustincich S."/>
            <person name="Harbers M."/>
            <person name="Hayashi Y."/>
            <person name="Hensch T.K."/>
            <person name="Hirokawa N."/>
            <person name="Hill D."/>
            <person name="Huminiecki L."/>
            <person name="Iacono M."/>
            <person name="Ikeo K."/>
            <person name="Iwama A."/>
            <person name="Ishikawa T."/>
            <person name="Jakt M."/>
            <person name="Kanapin A."/>
            <person name="Katoh M."/>
            <person name="Kawasawa Y."/>
            <person name="Kelso J."/>
            <person name="Kitamura H."/>
            <person name="Kitano H."/>
            <person name="Kollias G."/>
            <person name="Krishnan S.P."/>
            <person name="Kruger A."/>
            <person name="Kummerfeld S.K."/>
            <person name="Kurochkin I.V."/>
            <person name="Lareau L.F."/>
            <person name="Lazarevic D."/>
            <person name="Lipovich L."/>
            <person name="Liu J."/>
            <person name="Liuni S."/>
            <person name="McWilliam S."/>
            <person name="Madan Babu M."/>
            <person name="Madera M."/>
            <person name="Marchionni L."/>
            <person name="Matsuda H."/>
            <person name="Matsuzawa S."/>
            <person name="Miki H."/>
            <person name="Mignone F."/>
            <person name="Miyake S."/>
            <person name="Morris K."/>
            <person name="Mottagui-Tabar S."/>
            <person name="Mulder N."/>
            <person name="Nakano N."/>
            <person name="Nakauchi H."/>
            <person name="Ng P."/>
            <person name="Nilsson R."/>
            <person name="Nishiguchi S."/>
            <person name="Nishikawa S."/>
            <person name="Nori F."/>
            <person name="Ohara O."/>
            <person name="Okazaki Y."/>
            <person name="Orlando V."/>
            <person name="Pang K.C."/>
            <person name="Pavan W.J."/>
            <person name="Pavesi G."/>
            <person name="Pesole G."/>
            <person name="Petrovsky N."/>
            <person name="Piazza S."/>
            <person name="Reed J."/>
            <person name="Reid J.F."/>
            <person name="Ring B.Z."/>
            <person name="Ringwald M."/>
            <person name="Rost B."/>
            <person name="Ruan Y."/>
            <person name="Salzberg S.L."/>
            <person name="Sandelin A."/>
            <person name="Schneider C."/>
            <person name="Schoenbach C."/>
            <person name="Sekiguchi K."/>
            <person name="Semple C.A."/>
            <person name="Seno S."/>
            <person name="Sessa L."/>
            <person name="Sheng Y."/>
            <person name="Shibata Y."/>
            <person name="Shimada H."/>
            <person name="Shimada K."/>
            <person name="Silva D."/>
            <person name="Sinclair B."/>
            <person name="Sperling S."/>
            <person name="Stupka E."/>
            <person name="Sugiura K."/>
            <person name="Sultana R."/>
            <person name="Takenaka Y."/>
            <person name="Taki K."/>
            <person name="Tammoja K."/>
            <person name="Tan S.L."/>
            <person name="Tang S."/>
            <person name="Taylor M.S."/>
            <person name="Tegner J."/>
            <person name="Teichmann S.A."/>
            <person name="Ueda H.R."/>
            <person name="van Nimwegen E."/>
            <person name="Verardo R."/>
            <person name="Wei C.L."/>
            <person name="Yagi K."/>
            <person name="Yamanishi H."/>
            <person name="Zabarovsky E."/>
            <person name="Zhu S."/>
            <person name="Zimmer A."/>
            <person name="Hide W."/>
            <person name="Bult C."/>
            <person name="Grimmond S.M."/>
            <person name="Teasdale R.D."/>
            <person name="Liu E.T."/>
            <person name="Brusic V."/>
            <person name="Quackenbush J."/>
            <person name="Wahlestedt C."/>
            <person name="Mattick J.S."/>
            <person name="Hume D.A."/>
            <person name="Kai C."/>
            <person name="Sasaki D."/>
            <person name="Tomaru Y."/>
            <person name="Fukuda S."/>
            <person name="Kanamori-Katayama M."/>
            <person name="Suzuki M."/>
            <person name="Aoki J."/>
            <person name="Arakawa T."/>
            <person name="Iida J."/>
            <person name="Imamura K."/>
            <person name="Itoh M."/>
            <person name="Kato T."/>
            <person name="Kawaji H."/>
            <person name="Kawagashira N."/>
            <person name="Kawashima T."/>
            <person name="Kojima M."/>
            <person name="Kondo S."/>
            <person name="Konno H."/>
            <person name="Nakano K."/>
            <person name="Ninomiya N."/>
            <person name="Nishio T."/>
            <person name="Okada M."/>
            <person name="Plessy C."/>
            <person name="Shibata K."/>
            <person name="Shiraki T."/>
            <person name="Suzuki S."/>
            <person name="Tagami M."/>
            <person name="Waki K."/>
            <person name="Watahiki A."/>
            <person name="Okamura-Oho Y."/>
            <person name="Suzuki H."/>
            <person name="Kawai J."/>
            <person name="Hayashizaki Y."/>
        </authorList>
    </citation>
    <scope>NUCLEOTIDE SEQUENCE [LARGE SCALE MRNA]</scope>
    <source>
        <strain>C57BL/6J</strain>
        <tissue>Embryo</tissue>
        <tissue>Skin</tissue>
    </source>
</reference>
<reference key="2">
    <citation type="journal article" date="2009" name="Immunity">
        <title>The phagosomal proteome in interferon-gamma-activated macrophages.</title>
        <authorList>
            <person name="Trost M."/>
            <person name="English L."/>
            <person name="Lemieux S."/>
            <person name="Courcelles M."/>
            <person name="Desjardins M."/>
            <person name="Thibault P."/>
        </authorList>
    </citation>
    <scope>IDENTIFICATION BY MASS SPECTROMETRY [LARGE SCALE ANALYSIS]</scope>
</reference>
<sequence length="791" mass="90320">MLLSFRRNRRSQFNHIIHGFLPAASIAPKPAVPRTPPPRSPNPSPERPRSALAAAILATTLTGQTVAIPQPRQRSRSESDASDIEKDSFIKPYATTSELRLRQSWQNEPRRTSLPSFEMLGYGEDEDAETQVSTSCRESESTWKDVGDGRDATYTVPHRDQVLPSQKLVRKDDAPQPDWLSDSSSSSSSSTPQHTQQKDVKHSVLNLEGEKVRLHEKPPPSPDVAGRIHQRYTEITKEKFAELKEETVHLYSANQALSCELSALRQAMKDLQLKLKLVEKDNRKLKETEKASCQEGVTPELLCLRKQSQDLVDENEGLKMIVHRLNVELSRYQTKFRPLSEEESSHIQGLPSKGPTPPWLVDIKYLSPLLLAYEDRMKEKDKLSTALEEEMKTFRLRVQEVVKENEALHQELTKRSPVTVEEWRQLQTQAELVLDENKLLIEQLEIQQAKARDTHQAHLQDVSKLTKQLVLLEAKTQGQEKQLVESTEQLESLQAKCTELKAQLDSKIAVDVHTSIVNELKSQLQKEEEKDSAEMEELMAKLTALQVQKKSLLLEKSSWATRNRALEAELERTRKANRRYQKRIDVLRKQVEKAMGKEMSAHQYLANLVGLAETVTKERDSLKYLAQCLESEKHGVLNKILKGNIRLGKLEERVKGYKKQAALKLGDIHHRLKEQQEDFAGKAAQYQKEVKHLHRMLQEKQEVLDEALQQKRNMEGELEMVLESTAKENRRMRSLLQATLERRSTQHVTAPPDTCLRRSSQGDLLIGHDFSYGDVQLLATTNRQSLGESMA</sequence>
<feature type="chain" id="PRO_0000288810" description="Centrosomal protein of 89 kDa">
    <location>
        <begin position="1"/>
        <end position="791"/>
    </location>
</feature>
<feature type="region of interest" description="Disordered" evidence="4">
    <location>
        <begin position="27"/>
        <end position="203"/>
    </location>
</feature>
<feature type="coiled-coil region" evidence="3">
    <location>
        <begin position="252"/>
        <end position="291"/>
    </location>
</feature>
<feature type="coiled-coil region" evidence="3">
    <location>
        <begin position="370"/>
        <end position="598"/>
    </location>
</feature>
<feature type="coiled-coil region" evidence="3">
    <location>
        <begin position="670"/>
        <end position="737"/>
    </location>
</feature>
<feature type="compositionally biased region" description="Pro residues" evidence="4">
    <location>
        <begin position="30"/>
        <end position="45"/>
    </location>
</feature>
<feature type="compositionally biased region" description="Low complexity" evidence="4">
    <location>
        <begin position="50"/>
        <end position="62"/>
    </location>
</feature>
<feature type="compositionally biased region" description="Basic and acidic residues" evidence="4">
    <location>
        <begin position="75"/>
        <end position="89"/>
    </location>
</feature>
<feature type="compositionally biased region" description="Polar residues" evidence="4">
    <location>
        <begin position="94"/>
        <end position="107"/>
    </location>
</feature>
<feature type="compositionally biased region" description="Basic and acidic residues" evidence="4">
    <location>
        <begin position="137"/>
        <end position="161"/>
    </location>
</feature>
<feature type="compositionally biased region" description="Low complexity" evidence="4">
    <location>
        <begin position="181"/>
        <end position="190"/>
    </location>
</feature>
<feature type="modified residue" description="Phosphoserine" evidence="2">
    <location>
        <position position="50"/>
    </location>
</feature>
<accession>Q9CZX2</accession>
<accession>Q8C127</accession>
<proteinExistence type="evidence at protein level"/>
<name>CEP89_MOUSE</name>
<organism>
    <name type="scientific">Mus musculus</name>
    <name type="common">Mouse</name>
    <dbReference type="NCBI Taxonomy" id="10090"/>
    <lineage>
        <taxon>Eukaryota</taxon>
        <taxon>Metazoa</taxon>
        <taxon>Chordata</taxon>
        <taxon>Craniata</taxon>
        <taxon>Vertebrata</taxon>
        <taxon>Euteleostomi</taxon>
        <taxon>Mammalia</taxon>
        <taxon>Eutheria</taxon>
        <taxon>Euarchontoglires</taxon>
        <taxon>Glires</taxon>
        <taxon>Rodentia</taxon>
        <taxon>Myomorpha</taxon>
        <taxon>Muroidea</taxon>
        <taxon>Muridae</taxon>
        <taxon>Murinae</taxon>
        <taxon>Mus</taxon>
        <taxon>Mus</taxon>
    </lineage>
</organism>
<protein>
    <recommendedName>
        <fullName>Centrosomal protein of 89 kDa</fullName>
        <shortName>Cep89</shortName>
    </recommendedName>
    <alternativeName>
        <fullName>Coiled-coil domain-containing protein 123</fullName>
    </alternativeName>
</protein>
<keyword id="KW-0970">Cilium biogenesis/degradation</keyword>
<keyword id="KW-0175">Coiled coil</keyword>
<keyword id="KW-0963">Cytoplasm</keyword>
<keyword id="KW-0206">Cytoskeleton</keyword>
<keyword id="KW-0496">Mitochondrion</keyword>
<keyword id="KW-0597">Phosphoprotein</keyword>
<keyword id="KW-1185">Reference proteome</keyword>